<organism>
    <name type="scientific">Heyndrickxia coagulans</name>
    <name type="common">Weizmannia coagulans</name>
    <dbReference type="NCBI Taxonomy" id="1398"/>
    <lineage>
        <taxon>Bacteria</taxon>
        <taxon>Bacillati</taxon>
        <taxon>Bacillota</taxon>
        <taxon>Bacilli</taxon>
        <taxon>Bacillales</taxon>
        <taxon>Bacillaceae</taxon>
        <taxon>Heyndrickxia</taxon>
    </lineage>
</organism>
<name>T4BB_HEYCO</name>
<accession>Q07606</accession>
<protein>
    <recommendedName>
        <fullName evidence="3">Type II restriction enzyme BgcI specificity subunit S.BcgI</fullName>
        <shortName>S.BcgI</shortName>
        <ecNumber evidence="2">3.1.21.4</ecNumber>
    </recommendedName>
    <alternativeName>
        <fullName evidence="4">Restriction enzyme BgcI subunit B</fullName>
    </alternativeName>
</protein>
<gene>
    <name evidence="4" type="primary">bcgIB</name>
</gene>
<proteinExistence type="evidence at protein level"/>
<keyword id="KW-0903">Direct protein sequencing</keyword>
<keyword id="KW-0238">DNA-binding</keyword>
<keyword id="KW-0255">Endonuclease</keyword>
<keyword id="KW-0378">Hydrolase</keyword>
<keyword id="KW-0460">Magnesium</keyword>
<keyword id="KW-0540">Nuclease</keyword>
<keyword id="KW-0680">Restriction system</keyword>
<sequence length="341" mass="39161">MNNLIKYSTFLISDLFDVVIGKTIDGNKAQRNENGTPYITRKATRNGFEFMIDGEKEKLYSGKLPVITIGNETSKPFVQEFHFFTGTKVNICIPKLDLNRNHLLYITTMIENATKMFSYSYTINSTRLKSLKILLPIKGEEPDWDYMNTYISKILSNMEKNFDVQQNDGVSDLRSLKDLSWSQFKMDEIFSINSGVRLTKADMKPGNIPFIGATDSNNGITEFTSSTNASFDGNVLGVNYNGSVVENFYHPYKAVFSDDVKRLKLKNYPNNKHVLLFMKVVILQQKVKYAYGYKFNATRMKEQIILLPTKADGTPDYEFMEQYMMRMENKVVGRTTEKEAD</sequence>
<dbReference type="EC" id="3.1.21.4" evidence="2"/>
<dbReference type="EMBL" id="L17341">
    <property type="protein sequence ID" value="AAA16627.1"/>
    <property type="molecule type" value="Unassigned_DNA"/>
</dbReference>
<dbReference type="PIR" id="B53125">
    <property type="entry name" value="B53125"/>
</dbReference>
<dbReference type="SMR" id="Q07606"/>
<dbReference type="REBASE" id="4024">
    <property type="entry name" value="S.BcgI"/>
</dbReference>
<dbReference type="PRO" id="PR:Q07606"/>
<dbReference type="GO" id="GO:0003677">
    <property type="term" value="F:DNA binding"/>
    <property type="evidence" value="ECO:0007669"/>
    <property type="project" value="UniProtKB-KW"/>
</dbReference>
<dbReference type="GO" id="GO:0004519">
    <property type="term" value="F:endonuclease activity"/>
    <property type="evidence" value="ECO:0007669"/>
    <property type="project" value="UniProtKB-KW"/>
</dbReference>
<dbReference type="GO" id="GO:0009307">
    <property type="term" value="P:DNA restriction-modification system"/>
    <property type="evidence" value="ECO:0007669"/>
    <property type="project" value="UniProtKB-KW"/>
</dbReference>
<dbReference type="Gene3D" id="3.90.220.20">
    <property type="entry name" value="DNA methylase specificity domains"/>
    <property type="match status" value="2"/>
</dbReference>
<dbReference type="InterPro" id="IPR000055">
    <property type="entry name" value="Restrct_endonuc_typeI_TRD"/>
</dbReference>
<dbReference type="InterPro" id="IPR044946">
    <property type="entry name" value="Restrct_endonuc_typeI_TRD_sf"/>
</dbReference>
<dbReference type="Pfam" id="PF01420">
    <property type="entry name" value="Methylase_S"/>
    <property type="match status" value="2"/>
</dbReference>
<dbReference type="SUPFAM" id="SSF116734">
    <property type="entry name" value="DNA methylase specificity domain"/>
    <property type="match status" value="2"/>
</dbReference>
<feature type="chain" id="PRO_0000077379" description="Type II restriction enzyme BgcI specificity subunit S.BcgI">
    <location>
        <begin position="1"/>
        <end position="341"/>
    </location>
</feature>
<comment type="function">
    <text evidence="1 2 3">The specificity subunit (PubMed:12654995). A B, G, H and S subtype restriction enzyme that recognizes the double-stranded sequence 5'-CGAN(6)TGC-3' and cleaves bilaterally and symmetrically 10 base pairs upstream and 12 base pairs downstream of the sequence to release a 34-base pair fragment. Methylation of the recognition sequence occurs on the adenine in either one or both strands; seems to methylate restricted DNA (PubMed:12654995, PubMed:8276869, PubMed:8451198). This subunit degrades DNA in a non-specific manner (PubMed:8276869).</text>
</comment>
<comment type="catalytic activity">
    <reaction evidence="2">
        <text>Endonucleolytic cleavage of DNA to give specific double-stranded fragments with terminal 5'-phosphates.</text>
        <dbReference type="EC" id="3.1.21.4"/>
    </reaction>
</comment>
<comment type="cofactor">
    <cofactor evidence="2">
        <name>Mg(2+)</name>
        <dbReference type="ChEBI" id="CHEBI:18420"/>
    </cofactor>
</comment>
<comment type="activity regulation">
    <text evidence="2 6">DNA restriction requires S-adenosyl-L-methionine and Mg(2+), and is inhibited by S-adenosyl-homocysteine (PubMed:8451198). SAM may be a cofactor for DNA restriction (Probable).</text>
</comment>
<comment type="subunit">
    <text evidence="1">Heterotrimer of two A and one B subunit. Both subunits are necessary for DNA-binding, which is sequence non-specific.</text>
</comment>
<comment type="similarity">
    <text evidence="5">Belongs to the type-I restriction system S methylase family.</text>
</comment>
<evidence type="ECO:0000269" key="1">
    <source>
    </source>
</evidence>
<evidence type="ECO:0000269" key="2">
    <source>
    </source>
</evidence>
<evidence type="ECO:0000303" key="3">
    <source>
    </source>
</evidence>
<evidence type="ECO:0000303" key="4">
    <source>
    </source>
</evidence>
<evidence type="ECO:0000305" key="5"/>
<evidence type="ECO:0000305" key="6">
    <source>
    </source>
</evidence>
<reference key="1">
    <citation type="journal article" date="1994" name="J. Biol. Chem.">
        <title>Characterization of BcgI, a new kind of restriction-modification system.</title>
        <authorList>
            <person name="Kong H."/>
            <person name="Roemer S.E."/>
            <person name="Waite-Rees P.A."/>
            <person name="Benner J.S."/>
            <person name="Wilson G.G."/>
            <person name="Nwankwo D.O."/>
        </authorList>
    </citation>
    <scope>NUCLEOTIDE SEQUENCE [GENOMIC DNA]</scope>
    <scope>PROTEIN SEQUENCE OF 1-18</scope>
    <scope>FUNCTION</scope>
    <scope>SUBUNIT</scope>
    <source>
        <strain>ATCC 55055 / NEB 566</strain>
    </source>
</reference>
<reference key="2">
    <citation type="journal article" date="1993" name="Nucleic Acids Res.">
        <title>A unique restriction endonuclease, BcgI, from Bacillus coagulans.</title>
        <authorList>
            <person name="Kong H."/>
            <person name="Morgan R.D."/>
            <person name="Maunus R.E."/>
            <person name="Schildkraut I."/>
        </authorList>
    </citation>
    <scope>FUNCTION</scope>
    <scope>ACTIVITY REGULATION</scope>
    <scope>COFACTOR</scope>
    <source>
        <strain>ATCC 55055 / NEB 566</strain>
    </source>
</reference>
<reference key="3">
    <citation type="journal article" date="2003" name="Nucleic Acids Res.">
        <title>A nomenclature for restriction enzymes, DNA methyltransferases, homing endonucleases and their genes.</title>
        <authorList>
            <person name="Roberts R.J."/>
            <person name="Belfort M."/>
            <person name="Bestor T."/>
            <person name="Bhagwat A.S."/>
            <person name="Bickle T.A."/>
            <person name="Bitinaite J."/>
            <person name="Blumenthal R.M."/>
            <person name="Degtyarev S.K."/>
            <person name="Dryden D.T."/>
            <person name="Dybvig K."/>
            <person name="Firman K."/>
            <person name="Gromova E.S."/>
            <person name="Gumport R.I."/>
            <person name="Halford S.E."/>
            <person name="Hattman S."/>
            <person name="Heitman J."/>
            <person name="Hornby D.P."/>
            <person name="Janulaitis A."/>
            <person name="Jeltsch A."/>
            <person name="Josephsen J."/>
            <person name="Kiss A."/>
            <person name="Klaenhammer T.R."/>
            <person name="Kobayashi I."/>
            <person name="Kong H."/>
            <person name="Krueger D.H."/>
            <person name="Lacks S."/>
            <person name="Marinus M.G."/>
            <person name="Miyahara M."/>
            <person name="Morgan R.D."/>
            <person name="Murray N.E."/>
            <person name="Nagaraja V."/>
            <person name="Piekarowicz A."/>
            <person name="Pingoud A."/>
            <person name="Raleigh E."/>
            <person name="Rao D.N."/>
            <person name="Reich N."/>
            <person name="Repin V.E."/>
            <person name="Selker E.U."/>
            <person name="Shaw P.C."/>
            <person name="Stein D.C."/>
            <person name="Stoddard B.L."/>
            <person name="Szybalski W."/>
            <person name="Trautner T.A."/>
            <person name="Van Etten J.L."/>
            <person name="Vitor J.M."/>
            <person name="Wilson G.G."/>
            <person name="Xu S.Y."/>
        </authorList>
    </citation>
    <scope>NOMENCLATURE</scope>
    <scope>SUBTYPES</scope>
</reference>